<name>SCXL_ANDAU</name>
<proteinExistence type="evidence at protein level"/>
<sequence length="66" mass="7641">ARDGYIVHDGTNCKYSCEFGSEYKYCGPLCEKKKAKTGYCYLFACWCIEVPDEVRVWGEDGFMCWS</sequence>
<dbReference type="SMR" id="P80950"/>
<dbReference type="GO" id="GO:0005576">
    <property type="term" value="C:extracellular region"/>
    <property type="evidence" value="ECO:0007669"/>
    <property type="project" value="UniProtKB-SubCell"/>
</dbReference>
<dbReference type="GO" id="GO:0019871">
    <property type="term" value="F:sodium channel inhibitor activity"/>
    <property type="evidence" value="ECO:0007669"/>
    <property type="project" value="InterPro"/>
</dbReference>
<dbReference type="GO" id="GO:0090729">
    <property type="term" value="F:toxin activity"/>
    <property type="evidence" value="ECO:0007669"/>
    <property type="project" value="InterPro"/>
</dbReference>
<dbReference type="GO" id="GO:0006952">
    <property type="term" value="P:defense response"/>
    <property type="evidence" value="ECO:0007669"/>
    <property type="project" value="InterPro"/>
</dbReference>
<dbReference type="CDD" id="cd23106">
    <property type="entry name" value="neurotoxins_LC_scorpion"/>
    <property type="match status" value="1"/>
</dbReference>
<dbReference type="Gene3D" id="3.30.30.10">
    <property type="entry name" value="Knottin, scorpion toxin-like"/>
    <property type="match status" value="1"/>
</dbReference>
<dbReference type="InterPro" id="IPR044062">
    <property type="entry name" value="LCN-type_CS_alpha_beta_dom"/>
</dbReference>
<dbReference type="InterPro" id="IPR003614">
    <property type="entry name" value="Scorpion_toxin-like"/>
</dbReference>
<dbReference type="InterPro" id="IPR036574">
    <property type="entry name" value="Scorpion_toxin-like_sf"/>
</dbReference>
<dbReference type="InterPro" id="IPR018218">
    <property type="entry name" value="Scorpion_toxinL"/>
</dbReference>
<dbReference type="InterPro" id="IPR002061">
    <property type="entry name" value="Scorpion_toxinL/defensin"/>
</dbReference>
<dbReference type="Pfam" id="PF00537">
    <property type="entry name" value="Toxin_3"/>
    <property type="match status" value="1"/>
</dbReference>
<dbReference type="PRINTS" id="PR00285">
    <property type="entry name" value="SCORPNTOXIN"/>
</dbReference>
<dbReference type="SMART" id="SM00505">
    <property type="entry name" value="Knot1"/>
    <property type="match status" value="1"/>
</dbReference>
<dbReference type="SUPFAM" id="SSF57095">
    <property type="entry name" value="Scorpion toxin-like"/>
    <property type="match status" value="1"/>
</dbReference>
<dbReference type="PROSITE" id="PS51863">
    <property type="entry name" value="LCN_CSAB"/>
    <property type="match status" value="1"/>
</dbReference>
<organism>
    <name type="scientific">Androctonus australis</name>
    <name type="common">Sahara scorpion</name>
    <dbReference type="NCBI Taxonomy" id="6858"/>
    <lineage>
        <taxon>Eukaryota</taxon>
        <taxon>Metazoa</taxon>
        <taxon>Ecdysozoa</taxon>
        <taxon>Arthropoda</taxon>
        <taxon>Chelicerata</taxon>
        <taxon>Arachnida</taxon>
        <taxon>Scorpiones</taxon>
        <taxon>Buthida</taxon>
        <taxon>Buthoidea</taxon>
        <taxon>Buthidae</taxon>
        <taxon>Androctonus</taxon>
    </lineage>
</organism>
<comment type="function">
    <text>This protein is not toxic.</text>
</comment>
<comment type="subcellular location">
    <subcellularLocation>
        <location>Secreted</location>
    </subcellularLocation>
</comment>
<comment type="tissue specificity">
    <text>Expressed by the venom gland.</text>
</comment>
<comment type="domain">
    <text evidence="3">Has the structural arrangement of an alpha-helix connected to antiparallel beta-sheets by disulfide bonds (CS-alpha/beta).</text>
</comment>
<comment type="similarity">
    <text evidence="3">Belongs to the long (4 C-C) scorpion toxin superfamily. Sodium channel inhibitor family. Beta subfamily.</text>
</comment>
<feature type="chain" id="PRO_0000066829" description="Neurotoxin-like protein STR1">
    <location>
        <begin position="1"/>
        <end position="66"/>
    </location>
</feature>
<feature type="domain" description="LCN-type CS-alpha/beta" evidence="1">
    <location>
        <begin position="2"/>
        <end position="65"/>
    </location>
</feature>
<feature type="disulfide bond" evidence="1 2">
    <location>
        <begin position="13"/>
        <end position="64"/>
    </location>
</feature>
<feature type="disulfide bond" evidence="1 2">
    <location>
        <begin position="17"/>
        <end position="40"/>
    </location>
</feature>
<feature type="disulfide bond" evidence="1 2">
    <location>
        <begin position="26"/>
        <end position="45"/>
    </location>
</feature>
<feature type="disulfide bond" evidence="1 2">
    <location>
        <begin position="30"/>
        <end position="47"/>
    </location>
</feature>
<keyword id="KW-0903">Direct protein sequencing</keyword>
<keyword id="KW-1015">Disulfide bond</keyword>
<keyword id="KW-0964">Secreted</keyword>
<accession>P80950</accession>
<evidence type="ECO:0000255" key="1">
    <source>
        <dbReference type="PROSITE-ProRule" id="PRU01210"/>
    </source>
</evidence>
<evidence type="ECO:0000269" key="2">
    <source>
    </source>
</evidence>
<evidence type="ECO:0000305" key="3"/>
<protein>
    <recommendedName>
        <fullName>Neurotoxin-like protein STR1</fullName>
    </recommendedName>
    <alternativeName>
        <fullName>Anatoxin AaH STR1</fullName>
        <shortName>AaHSTR1</shortName>
    </alternativeName>
</protein>
<reference key="1">
    <citation type="submission" date="1997-08" db="UniProtKB">
        <authorList>
            <person name="Mansuelle P."/>
            <person name="Hassani O."/>
            <person name="Cestele S."/>
            <person name="Loret E.P."/>
            <person name="van Dorsselaer A."/>
            <person name="Rochat H."/>
            <person name="Sampieri F."/>
        </authorList>
    </citation>
    <scope>PROTEIN SEQUENCE</scope>
    <source>
        <strain>Hector</strain>
        <tissue>Venom</tissue>
    </source>
</reference>
<reference key="2">
    <citation type="journal article" date="1997" name="Eur. J. Biochem.">
        <title>1H-NMR-derived secondary structure and overall fold of a natural anatoxin from the scorpion Androctonus australis hector.</title>
        <authorList>
            <person name="Blanc E."/>
            <person name="Hassani O."/>
            <person name="Meunier S."/>
            <person name="Mansuelle P."/>
            <person name="Sampieri F."/>
            <person name="Rochat H."/>
            <person name="Darbon H."/>
        </authorList>
    </citation>
    <scope>STRUCTURE BY NMR</scope>
    <scope>DISULFIDE BONDS</scope>
    <source>
        <strain>Hector</strain>
    </source>
</reference>